<evidence type="ECO:0000250" key="1">
    <source>
        <dbReference type="UniProtKB" id="Q89Z59"/>
    </source>
</evidence>
<evidence type="ECO:0000269" key="2">
    <source>
    </source>
</evidence>
<evidence type="ECO:0000269" key="3">
    <source>
    </source>
</evidence>
<evidence type="ECO:0000303" key="4">
    <source>
    </source>
</evidence>
<evidence type="ECO:0000303" key="5">
    <source>
    </source>
</evidence>
<evidence type="ECO:0000305" key="6"/>
<evidence type="ECO:0000305" key="7">
    <source>
    </source>
</evidence>
<evidence type="ECO:0007744" key="8">
    <source>
        <dbReference type="PDB" id="7BST"/>
    </source>
</evidence>
<evidence type="ECO:0007744" key="9">
    <source>
        <dbReference type="PDB" id="7BTO"/>
    </source>
</evidence>
<evidence type="ECO:0007744" key="10">
    <source>
        <dbReference type="PDB" id="7BTP"/>
    </source>
</evidence>
<evidence type="ECO:0007744" key="11">
    <source>
        <dbReference type="PDB" id="7BTQ"/>
    </source>
</evidence>
<evidence type="ECO:0007744" key="12">
    <source>
        <dbReference type="PDB" id="7BTR"/>
    </source>
</evidence>
<geneLocation type="plasmid">
    <name>IncFIV R124/3</name>
</geneLocation>
<protein>
    <recommendedName>
        <fullName>Type I restriction enzyme EcoR124I/EcoR124II methylase subunit</fullName>
        <shortName>M protein</shortName>
        <ecNumber evidence="3 4">2.1.1.72</ecNumber>
    </recommendedName>
    <alternativeName>
        <fullName evidence="4">Type I methyltransferase M.EcoR124II</fullName>
        <shortName evidence="4">M.EcoR124II</shortName>
    </alternativeName>
    <alternativeName>
        <fullName evidence="5">Type I restriction enzyme EcoR124I/EcoR124/3 methylase subunit</fullName>
    </alternativeName>
</protein>
<proteinExistence type="evidence at protein level"/>
<keyword id="KW-0002">3D-structure</keyword>
<keyword id="KW-0238">DNA-binding</keyword>
<keyword id="KW-0489">Methyltransferase</keyword>
<keyword id="KW-0614">Plasmid</keyword>
<keyword id="KW-0680">Restriction system</keyword>
<keyword id="KW-0949">S-adenosyl-L-methionine</keyword>
<keyword id="KW-0808">Transferase</keyword>
<gene>
    <name type="primary">hsdM</name>
    <name type="synonym">hsm</name>
</gene>
<comment type="function">
    <text evidence="2 3 4 7">The subtype gamma methyltransferase (M) subunit of a type I restriction enzyme. The M and S subunits together form a methyltransferase (MTase) that methylates A-3 on the top and bottom strand of the sequence 5'-GAAN(6)RTCG-3' (for EcoR124I) and 5'-GAAN(7)RTCG-3' (for EcoR124II). In the presence of the R subunit the complex can also act as an endonuclease, binding to the same target sequence but cutting the DNA some distance from this site (PubMed:15300241). Whether the DNA is cut or modified depends on the methylation state of the target sequence. When the target site is unmodified, the DNA is cut. When the target site is hemimethylated, the complex acts as a maintenance MTase modifying the DNA so that both strands become methylated (PubMed:12654995, PubMed:32483229). After locating a non-methylated recognition site, the enzyme complex serves as a molecular motor that translocates DNA in an ATP-dependent manner until a collision occurs that triggers cleavage (Probable). The R(1)M(2)S(1) complex translocates an average of 555 bp/second on nicked DNA; the R(2)M(2)S(1) complex translocates at double that speed (PubMed:15300241). The 2 R subunit motors are independent and track along the helical pitch of the DNA, inducing positive supercoiling ahead of themselves (PubMed:15300241).</text>
</comment>
<comment type="catalytic activity">
    <reaction evidence="3">
        <text>a 2'-deoxyadenosine in DNA + S-adenosyl-L-methionine = an N(6)-methyl-2'-deoxyadenosine in DNA + S-adenosyl-L-homocysteine + H(+)</text>
        <dbReference type="Rhea" id="RHEA:15197"/>
        <dbReference type="Rhea" id="RHEA-COMP:12418"/>
        <dbReference type="Rhea" id="RHEA-COMP:12419"/>
        <dbReference type="ChEBI" id="CHEBI:15378"/>
        <dbReference type="ChEBI" id="CHEBI:57856"/>
        <dbReference type="ChEBI" id="CHEBI:59789"/>
        <dbReference type="ChEBI" id="CHEBI:90615"/>
        <dbReference type="ChEBI" id="CHEBI:90616"/>
        <dbReference type="EC" id="2.1.1.72"/>
    </reaction>
</comment>
<comment type="subunit">
    <text evidence="3">The type I restriction/modification system is composed of three polypeptides R, M and S; the restriction enzyme has stoichiometry R(2)M(2)S(1) while the methyltransferase is M(2)S(1). There is an equilibrium between R(2)M(2)S(1) and R(1)M(2)S(1); the latter is methylation and translocation proficient but restriction deficient.</text>
</comment>
<comment type="subunit">
    <text evidence="3">(Microbial infection) Holoenenzyme interacts with Escherichia phage T7 protein Ocr; this interaction leads to the inhibition of the restriction activity, but may still allow methylation and translocation.</text>
</comment>
<comment type="domain">
    <text evidence="3">The C-terminus is required for assembly of the restriction enzyme complex. The individual domains assume different positions in the enzyme, allowing the holoenzyme to regulate the methylase, endonuclease and translocation states.</text>
</comment>
<comment type="miscellaneous">
    <text evidence="3">Type I restriction and modification enzymes are complex, multifunctional systems which require ATP, S-adenosyl methionine and Mg(2+) as cofactors and, in addition to their endonucleolytic and methylase activities, are potent DNA-dependent ATPases.</text>
</comment>
<comment type="similarity">
    <text evidence="6">Belongs to the N(4)/N(6)-methyltransferase family.</text>
</comment>
<accession>P10484</accession>
<feature type="chain" id="PRO_0000088023" description="Type I restriction enzyme EcoR124I/EcoR124II methylase subunit">
    <location>
        <begin position="1"/>
        <end position="520"/>
    </location>
</feature>
<feature type="region of interest" description="N-terminal domain" evidence="7">
    <location>
        <begin position="10"/>
        <end position="190"/>
    </location>
</feature>
<feature type="region of interest" description="Catalytic domain" evidence="7">
    <location>
        <begin position="198"/>
        <end position="473"/>
    </location>
</feature>
<feature type="region of interest" description="C-terminal tail" evidence="7">
    <location>
        <begin position="481"/>
        <end position="510"/>
    </location>
</feature>
<feature type="binding site" evidence="1">
    <location>
        <begin position="198"/>
        <end position="203"/>
    </location>
    <ligand>
        <name>S-adenosyl-L-methionine</name>
        <dbReference type="ChEBI" id="CHEBI:59789"/>
    </ligand>
</feature>
<feature type="binding site" evidence="1">
    <location>
        <begin position="230"/>
        <end position="232"/>
    </location>
    <ligand>
        <name>S-adenosyl-L-methionine</name>
        <dbReference type="ChEBI" id="CHEBI:59789"/>
    </ligand>
</feature>
<feature type="binding site" evidence="1">
    <location>
        <position position="254"/>
    </location>
    <ligand>
        <name>S-adenosyl-L-methionine</name>
        <dbReference type="ChEBI" id="CHEBI:59789"/>
    </ligand>
</feature>
<feature type="mutagenesis site" description="Little change in holoenzyme assembly, no DNA restriction." evidence="3">
    <location>
        <begin position="135"/>
        <end position="146"/>
    </location>
</feature>
<feature type="mutagenesis site" description="Almost complete loss of holoenzyme assembly, no DNA restriction." evidence="3">
    <location>
        <begin position="476"/>
        <end position="510"/>
    </location>
</feature>
<name>T1M1_ECOLX</name>
<reference key="1">
    <citation type="journal article" date="1989" name="J. Mol. Biol.">
        <title>Basis for changes in DNA recognition by the EcoR124 and EcoR124/3 type I DNA restriction and modification enzymes.</title>
        <authorList>
            <person name="Price C."/>
            <person name="Lingner J."/>
            <person name="Bickle J."/>
            <person name="Firman T.A."/>
            <person name="Glover S.W."/>
        </authorList>
    </citation>
    <scope>NUCLEOTIDE SEQUENCE [GENOMIC DNA]</scope>
    <source>
        <plasmid>IncFIV R124/3</plasmid>
    </source>
</reference>
<reference key="2">
    <citation type="journal article" date="2004" name="Nat. Struct. Mol. Biol.">
        <title>Real-time observation of DNA translocation by the type I restriction modification enzyme EcoR124I.</title>
        <authorList>
            <person name="Seidel R."/>
            <person name="van Noort J."/>
            <person name="van der Scheer C."/>
            <person name="Bloom J.G."/>
            <person name="Dekker N.H."/>
            <person name="Dutta C.F."/>
            <person name="Blundell A."/>
            <person name="Robinson T."/>
            <person name="Firman K."/>
            <person name="Dekker C."/>
        </authorList>
    </citation>
    <scope>FUNCTION</scope>
    <scope>SUBUNIT</scope>
</reference>
<reference key="3">
    <citation type="journal article" date="2003" name="Nucleic Acids Res.">
        <title>A nomenclature for restriction enzymes, DNA methyltransferases, homing endonucleases and their genes.</title>
        <authorList>
            <person name="Roberts R.J."/>
            <person name="Belfort M."/>
            <person name="Bestor T."/>
            <person name="Bhagwat A.S."/>
            <person name="Bickle T.A."/>
            <person name="Bitinaite J."/>
            <person name="Blumenthal R.M."/>
            <person name="Degtyarev S.K."/>
            <person name="Dryden D.T."/>
            <person name="Dybvig K."/>
            <person name="Firman K."/>
            <person name="Gromova E.S."/>
            <person name="Gumport R.I."/>
            <person name="Halford S.E."/>
            <person name="Hattman S."/>
            <person name="Heitman J."/>
            <person name="Hornby D.P."/>
            <person name="Janulaitis A."/>
            <person name="Jeltsch A."/>
            <person name="Josephsen J."/>
            <person name="Kiss A."/>
            <person name="Klaenhammer T.R."/>
            <person name="Kobayashi I."/>
            <person name="Kong H."/>
            <person name="Krueger D.H."/>
            <person name="Lacks S."/>
            <person name="Marinus M.G."/>
            <person name="Miyahara M."/>
            <person name="Morgan R.D."/>
            <person name="Murray N.E."/>
            <person name="Nagaraja V."/>
            <person name="Piekarowicz A."/>
            <person name="Pingoud A."/>
            <person name="Raleigh E."/>
            <person name="Rao D.N."/>
            <person name="Reich N."/>
            <person name="Repin V.E."/>
            <person name="Selker E.U."/>
            <person name="Shaw P.C."/>
            <person name="Stein D.C."/>
            <person name="Stoddard B.L."/>
            <person name="Szybalski W."/>
            <person name="Trautner T.A."/>
            <person name="Van Etten J.L."/>
            <person name="Vitor J.M."/>
            <person name="Wilson G.G."/>
            <person name="Xu S.Y."/>
        </authorList>
    </citation>
    <scope>NOMENCLATURE</scope>
    <scope>SUBTYPE</scope>
</reference>
<reference evidence="8 9 10 11 12" key="4">
    <citation type="journal article" date="2020" name="Nat. Microbiol.">
        <title>Structural insights into assembly, operation and inhibition of a type I restriction-modification system.</title>
        <authorList>
            <person name="Gao Y."/>
            <person name="Cao D."/>
            <person name="Zhu J."/>
            <person name="Feng H."/>
            <person name="Luo X."/>
            <person name="Liu S."/>
            <person name="Yan X.X."/>
            <person name="Zhang X."/>
            <person name="Gao P."/>
        </authorList>
    </citation>
    <scope>STRUCTURE BY ELECTRON MICROSCOPY (3.97 ANGSTROMS) IN COMPLEX WITH R AND S SUBUNITS AND WITH ESCHERICHIA PHAGE T7 PROTEIN OCR</scope>
    <scope>STRUCTURE BY ELECTRON MICROSCOPY (6.33 ANGSTROMS) IN COMPLEX WITH S SUBUNIT AND DNA</scope>
    <scope>FUNCTION</scope>
    <scope>CATALYTIC ACTIVITY</scope>
    <scope>INTERACTION WITH ESCHERICHIA PHAGE T7 PROTEIN OCR (MICROBIAL INFECTION)</scope>
    <scope>DOMAIN</scope>
    <scope>DNA-BINDING</scope>
    <scope>MUTAGENESIS OF 135-ASP--THR-146 AND 476-ALA--VAL-510</scope>
</reference>
<sequence length="520" mass="58013">MKMTSIQQRAELHRQIWQIANDVRGSVDGWDFKQYVLGALFYRFISENFSSYIEAGDDSICYAKLDDSVITDDIKDDAIKTKGYFIYPSQLFCNVAAKANTNDRLNADLNSIFVAIESSAYGYPSEADIKGLFADFDTTSNRLGNTVKDKNARLAAVLKGVEGLKLGDFNEHQIDLFGDAYEFLISNYAANAGKSGGEFFTPQHVSKLIAQLAMHGQTHVNKIYDPAAGSGSLLLQAKKQFDNHIIEEGFFGQEINHTTYNLARMNMFLHNINYDKFDIKLGNTLTEPHFRDEKPFDAIVSNPPYSVKWIGSDDPTLINDERFAPAGVLAPKSKADFAFVLHALNYLSAKGRAAIVCFPGIFYRGGAEQKIRQYLVDNNYVETVISLAPNLFFGTTIAVNILVLSKHKTDTNVQFIDASELFKKETNNNILTDAHIEQIMQVFASKEDVAHLAKSVAFETVVANDYNLSVSSYVEAKDNREIIDIAELNAELKTTVSKIDQLRKDIDAIVAEIEGCEVQK</sequence>
<organism>
    <name type="scientific">Escherichia coli</name>
    <dbReference type="NCBI Taxonomy" id="562"/>
    <lineage>
        <taxon>Bacteria</taxon>
        <taxon>Pseudomonadati</taxon>
        <taxon>Pseudomonadota</taxon>
        <taxon>Gammaproteobacteria</taxon>
        <taxon>Enterobacterales</taxon>
        <taxon>Enterobacteriaceae</taxon>
        <taxon>Escherichia</taxon>
    </lineage>
</organism>
<dbReference type="EC" id="2.1.1.72" evidence="3 4"/>
<dbReference type="EMBL" id="X13145">
    <property type="protein sequence ID" value="CAA31541.1"/>
    <property type="molecule type" value="Genomic_DNA"/>
</dbReference>
<dbReference type="PIR" id="S02166">
    <property type="entry name" value="S02166"/>
</dbReference>
<dbReference type="PDB" id="7BST">
    <property type="method" value="EM"/>
    <property type="resolution" value="4.37 A"/>
    <property type="chains" value="D/E=1-520"/>
</dbReference>
<dbReference type="PDB" id="7BTO">
    <property type="method" value="EM"/>
    <property type="resolution" value="3.97 A"/>
    <property type="chains" value="A/B=1-520"/>
</dbReference>
<dbReference type="PDB" id="7BTP">
    <property type="method" value="EM"/>
    <property type="resolution" value="4.01 A"/>
    <property type="chains" value="B/C=1-520"/>
</dbReference>
<dbReference type="PDB" id="7BTQ">
    <property type="method" value="EM"/>
    <property type="resolution" value="4.54 A"/>
    <property type="chains" value="A/D=1-520"/>
</dbReference>
<dbReference type="PDB" id="7BTR">
    <property type="method" value="EM"/>
    <property type="resolution" value="4.54 A"/>
    <property type="chains" value="A/D=1-520"/>
</dbReference>
<dbReference type="PDBsum" id="7BST"/>
<dbReference type="PDBsum" id="7BTO"/>
<dbReference type="PDBsum" id="7BTP"/>
<dbReference type="PDBsum" id="7BTQ"/>
<dbReference type="PDBsum" id="7BTR"/>
<dbReference type="EMDB" id="EMD-30166"/>
<dbReference type="EMDB" id="EMD-30180"/>
<dbReference type="EMDB" id="EMD-30181"/>
<dbReference type="EMDB" id="EMD-30182"/>
<dbReference type="EMDB" id="EMD-30183"/>
<dbReference type="SMR" id="P10484"/>
<dbReference type="DIP" id="DIP-17004N"/>
<dbReference type="REBASE" id="162028">
    <property type="entry name" value="M.Wso11848ORF763P"/>
</dbReference>
<dbReference type="REBASE" id="190419">
    <property type="entry name" value="M.Bce021ORF873P"/>
</dbReference>
<dbReference type="REBASE" id="191863">
    <property type="entry name" value="M.Apa1447ORF2453P"/>
</dbReference>
<dbReference type="REBASE" id="191880">
    <property type="entry name" value="M.Apa1468ORF2954P"/>
</dbReference>
<dbReference type="REBASE" id="203796">
    <property type="entry name" value="M.Ppe892ORF47P"/>
</dbReference>
<dbReference type="REBASE" id="203828">
    <property type="entry name" value="M.Bli141ORF4598P"/>
</dbReference>
<dbReference type="REBASE" id="203831">
    <property type="entry name" value="M.Bli27ORF807P"/>
</dbReference>
<dbReference type="REBASE" id="204921">
    <property type="entry name" value="M.Ppe194ORF1864P"/>
</dbReference>
<dbReference type="REBASE" id="233048">
    <property type="entry name" value="M.SpaF3KORF1139P"/>
</dbReference>
<dbReference type="REBASE" id="3391">
    <property type="entry name" value="M.EcoR124II"/>
</dbReference>
<dbReference type="BRENDA" id="2.1.1.72">
    <property type="organism ID" value="2026"/>
</dbReference>
<dbReference type="PRO" id="PR:P10484"/>
<dbReference type="GO" id="GO:0003677">
    <property type="term" value="F:DNA binding"/>
    <property type="evidence" value="ECO:0007669"/>
    <property type="project" value="UniProtKB-KW"/>
</dbReference>
<dbReference type="GO" id="GO:0008170">
    <property type="term" value="F:N-methyltransferase activity"/>
    <property type="evidence" value="ECO:0007669"/>
    <property type="project" value="InterPro"/>
</dbReference>
<dbReference type="GO" id="GO:0009007">
    <property type="term" value="F:site-specific DNA-methyltransferase (adenine-specific) activity"/>
    <property type="evidence" value="ECO:0007669"/>
    <property type="project" value="UniProtKB-EC"/>
</dbReference>
<dbReference type="GO" id="GO:0009307">
    <property type="term" value="P:DNA restriction-modification system"/>
    <property type="evidence" value="ECO:0007669"/>
    <property type="project" value="UniProtKB-KW"/>
</dbReference>
<dbReference type="GO" id="GO:0032259">
    <property type="term" value="P:methylation"/>
    <property type="evidence" value="ECO:0007669"/>
    <property type="project" value="UniProtKB-KW"/>
</dbReference>
<dbReference type="CDD" id="cd02440">
    <property type="entry name" value="AdoMet_MTases"/>
    <property type="match status" value="1"/>
</dbReference>
<dbReference type="Gene3D" id="1.20.1260.30">
    <property type="match status" value="1"/>
</dbReference>
<dbReference type="Gene3D" id="3.40.50.150">
    <property type="entry name" value="Vaccinia Virus protein VP39"/>
    <property type="match status" value="1"/>
</dbReference>
<dbReference type="InterPro" id="IPR022749">
    <property type="entry name" value="D12N6_MeTrfase_N"/>
</dbReference>
<dbReference type="InterPro" id="IPR051537">
    <property type="entry name" value="DNA_Adenine_Mtase"/>
</dbReference>
<dbReference type="InterPro" id="IPR003356">
    <property type="entry name" value="DNA_methylase_A-5"/>
</dbReference>
<dbReference type="InterPro" id="IPR002052">
    <property type="entry name" value="DNA_methylase_N6_adenine_CS"/>
</dbReference>
<dbReference type="InterPro" id="IPR004546">
    <property type="entry name" value="Restrct_endonuc_T1M"/>
</dbReference>
<dbReference type="InterPro" id="IPR029063">
    <property type="entry name" value="SAM-dependent_MTases_sf"/>
</dbReference>
<dbReference type="InterPro" id="IPR038333">
    <property type="entry name" value="T1MK-like_N_sf"/>
</dbReference>
<dbReference type="NCBIfam" id="TIGR00497">
    <property type="entry name" value="hsdM"/>
    <property type="match status" value="1"/>
</dbReference>
<dbReference type="PANTHER" id="PTHR42933:SF1">
    <property type="entry name" value="SITE-SPECIFIC DNA-METHYLTRANSFERASE (ADENINE-SPECIFIC)"/>
    <property type="match status" value="1"/>
</dbReference>
<dbReference type="PANTHER" id="PTHR42933">
    <property type="entry name" value="SLR6095 PROTEIN"/>
    <property type="match status" value="1"/>
</dbReference>
<dbReference type="Pfam" id="PF12161">
    <property type="entry name" value="HsdM_N"/>
    <property type="match status" value="1"/>
</dbReference>
<dbReference type="Pfam" id="PF02384">
    <property type="entry name" value="N6_Mtase"/>
    <property type="match status" value="1"/>
</dbReference>
<dbReference type="PRINTS" id="PR00507">
    <property type="entry name" value="N12N6MTFRASE"/>
</dbReference>
<dbReference type="SUPFAM" id="SSF53335">
    <property type="entry name" value="S-adenosyl-L-methionine-dependent methyltransferases"/>
    <property type="match status" value="1"/>
</dbReference>
<dbReference type="PROSITE" id="PS00092">
    <property type="entry name" value="N6_MTASE"/>
    <property type="match status" value="1"/>
</dbReference>